<reference key="1">
    <citation type="journal article" date="2000" name="Nature">
        <title>Complete genome sequence of Pseudomonas aeruginosa PAO1, an opportunistic pathogen.</title>
        <authorList>
            <person name="Stover C.K."/>
            <person name="Pham X.-Q.T."/>
            <person name="Erwin A.L."/>
            <person name="Mizoguchi S.D."/>
            <person name="Warrener P."/>
            <person name="Hickey M.J."/>
            <person name="Brinkman F.S.L."/>
            <person name="Hufnagle W.O."/>
            <person name="Kowalik D.J."/>
            <person name="Lagrou M."/>
            <person name="Garber R.L."/>
            <person name="Goltry L."/>
            <person name="Tolentino E."/>
            <person name="Westbrock-Wadman S."/>
            <person name="Yuan Y."/>
            <person name="Brody L.L."/>
            <person name="Coulter S.N."/>
            <person name="Folger K.R."/>
            <person name="Kas A."/>
            <person name="Larbig K."/>
            <person name="Lim R.M."/>
            <person name="Smith K.A."/>
            <person name="Spencer D.H."/>
            <person name="Wong G.K.-S."/>
            <person name="Wu Z."/>
            <person name="Paulsen I.T."/>
            <person name="Reizer J."/>
            <person name="Saier M.H. Jr."/>
            <person name="Hancock R.E.W."/>
            <person name="Lory S."/>
            <person name="Olson M.V."/>
        </authorList>
    </citation>
    <scope>NUCLEOTIDE SEQUENCE [LARGE SCALE GENOMIC DNA]</scope>
    <source>
        <strain>ATCC 15692 / DSM 22644 / CIP 104116 / JCM 14847 / LMG 12228 / 1C / PRS 101 / PAO1</strain>
    </source>
</reference>
<gene>
    <name type="ordered locus">PA3435</name>
</gene>
<feature type="chain" id="PRO_0000196581" description="Uncharacterized protein PA3435">
    <location>
        <begin position="1"/>
        <end position="150"/>
    </location>
</feature>
<feature type="domain" description="Flavodoxin-like" evidence="2">
    <location>
        <begin position="3"/>
        <end position="145"/>
    </location>
</feature>
<feature type="strand" evidence="4">
    <location>
        <begin position="2"/>
        <end position="8"/>
    </location>
</feature>
<feature type="strand" evidence="4">
    <location>
        <begin position="10"/>
        <end position="12"/>
    </location>
</feature>
<feature type="helix" evidence="4">
    <location>
        <begin position="13"/>
        <end position="27"/>
    </location>
</feature>
<feature type="strand" evidence="4">
    <location>
        <begin position="31"/>
        <end position="34"/>
    </location>
</feature>
<feature type="helix" evidence="4">
    <location>
        <begin position="40"/>
        <end position="46"/>
    </location>
</feature>
<feature type="strand" evidence="4">
    <location>
        <begin position="49"/>
        <end position="56"/>
    </location>
</feature>
<feature type="turn" evidence="4">
    <location>
        <begin position="65"/>
        <end position="67"/>
    </location>
</feature>
<feature type="helix" evidence="4">
    <location>
        <begin position="68"/>
        <end position="77"/>
    </location>
</feature>
<feature type="strand" evidence="4">
    <location>
        <begin position="85"/>
        <end position="92"/>
    </location>
</feature>
<feature type="turn" evidence="4">
    <location>
        <begin position="94"/>
        <end position="97"/>
    </location>
</feature>
<feature type="helix" evidence="4">
    <location>
        <begin position="102"/>
        <end position="114"/>
    </location>
</feature>
<feature type="strand" evidence="4">
    <location>
        <begin position="117"/>
        <end position="120"/>
    </location>
</feature>
<feature type="strand" evidence="4">
    <location>
        <begin position="123"/>
        <end position="126"/>
    </location>
</feature>
<feature type="turn" evidence="5">
    <location>
        <begin position="127"/>
        <end position="129"/>
    </location>
</feature>
<feature type="helix" evidence="4">
    <location>
        <begin position="133"/>
        <end position="136"/>
    </location>
</feature>
<feature type="helix" evidence="4">
    <location>
        <begin position="138"/>
        <end position="148"/>
    </location>
</feature>
<organism>
    <name type="scientific">Pseudomonas aeruginosa (strain ATCC 15692 / DSM 22644 / CIP 104116 / JCM 14847 / LMG 12228 / 1C / PRS 101 / PAO1)</name>
    <dbReference type="NCBI Taxonomy" id="208964"/>
    <lineage>
        <taxon>Bacteria</taxon>
        <taxon>Pseudomonadati</taxon>
        <taxon>Pseudomonadota</taxon>
        <taxon>Gammaproteobacteria</taxon>
        <taxon>Pseudomonadales</taxon>
        <taxon>Pseudomonadaceae</taxon>
        <taxon>Pseudomonas</taxon>
    </lineage>
</organism>
<dbReference type="EMBL" id="AE004091">
    <property type="protein sequence ID" value="AAG06823.1"/>
    <property type="molecule type" value="Genomic_DNA"/>
</dbReference>
<dbReference type="PIR" id="A83217">
    <property type="entry name" value="A83217"/>
</dbReference>
<dbReference type="RefSeq" id="NP_252125.1">
    <property type="nucleotide sequence ID" value="NC_002516.2"/>
</dbReference>
<dbReference type="RefSeq" id="WP_003102319.1">
    <property type="nucleotide sequence ID" value="NZ_QZGE01000037.1"/>
</dbReference>
<dbReference type="PDB" id="5B3K">
    <property type="method" value="X-ray"/>
    <property type="resolution" value="1.70 A"/>
    <property type="chains" value="A=1-150"/>
</dbReference>
<dbReference type="PDB" id="5B3L">
    <property type="method" value="X-ray"/>
    <property type="resolution" value="1.80 A"/>
    <property type="chains" value="A=1-150"/>
</dbReference>
<dbReference type="PDBsum" id="5B3K"/>
<dbReference type="PDBsum" id="5B3L"/>
<dbReference type="SMR" id="Q9HYH1"/>
<dbReference type="FunCoup" id="Q9HYH1">
    <property type="interactions" value="9"/>
</dbReference>
<dbReference type="STRING" id="208964.PA3435"/>
<dbReference type="PaxDb" id="208964-PA3435"/>
<dbReference type="DNASU" id="879040"/>
<dbReference type="GeneID" id="879040"/>
<dbReference type="KEGG" id="pae:PA3435"/>
<dbReference type="PATRIC" id="fig|208964.12.peg.3596"/>
<dbReference type="PseudoCAP" id="PA3435"/>
<dbReference type="HOGENOM" id="CLU_051402_4_1_6"/>
<dbReference type="InParanoid" id="Q9HYH1"/>
<dbReference type="OrthoDB" id="359268at2"/>
<dbReference type="PhylomeDB" id="Q9HYH1"/>
<dbReference type="BioCyc" id="PAER208964:G1FZ6-3502-MONOMER"/>
<dbReference type="Proteomes" id="UP000002438">
    <property type="component" value="Chromosome"/>
</dbReference>
<dbReference type="GO" id="GO:0010181">
    <property type="term" value="F:FMN binding"/>
    <property type="evidence" value="ECO:0007669"/>
    <property type="project" value="InterPro"/>
</dbReference>
<dbReference type="GO" id="GO:0016655">
    <property type="term" value="F:oxidoreductase activity, acting on NAD(P)H, quinone or similar compound as acceptor"/>
    <property type="evidence" value="ECO:0007669"/>
    <property type="project" value="UniProtKB-ARBA"/>
</dbReference>
<dbReference type="Gene3D" id="3.40.50.360">
    <property type="match status" value="1"/>
</dbReference>
<dbReference type="InterPro" id="IPR001094">
    <property type="entry name" value="Flavdoxin-like"/>
</dbReference>
<dbReference type="InterPro" id="IPR008254">
    <property type="entry name" value="Flavodoxin/NO_synth"/>
</dbReference>
<dbReference type="InterPro" id="IPR029039">
    <property type="entry name" value="Flavoprotein-like_sf"/>
</dbReference>
<dbReference type="NCBIfam" id="NF004343">
    <property type="entry name" value="PRK05723.1"/>
    <property type="match status" value="1"/>
</dbReference>
<dbReference type="PANTHER" id="PTHR19384:SF128">
    <property type="entry name" value="NADPH OXIDOREDUCTASE A"/>
    <property type="match status" value="1"/>
</dbReference>
<dbReference type="PANTHER" id="PTHR19384">
    <property type="entry name" value="NITRIC OXIDE SYNTHASE-RELATED"/>
    <property type="match status" value="1"/>
</dbReference>
<dbReference type="Pfam" id="PF00258">
    <property type="entry name" value="Flavodoxin_1"/>
    <property type="match status" value="1"/>
</dbReference>
<dbReference type="PRINTS" id="PR00369">
    <property type="entry name" value="FLAVODOXIN"/>
</dbReference>
<dbReference type="SUPFAM" id="SSF52218">
    <property type="entry name" value="Flavoproteins"/>
    <property type="match status" value="1"/>
</dbReference>
<dbReference type="PROSITE" id="PS50902">
    <property type="entry name" value="FLAVODOXIN_LIKE"/>
    <property type="match status" value="1"/>
</dbReference>
<protein>
    <recommendedName>
        <fullName>Uncharacterized protein PA3435</fullName>
    </recommendedName>
</protein>
<sequence>MKVAILSGSVYGTAEEVARHAQKLLSAAGLEASHLPRASLDELKAFAPEAFLVVTSTTGMGELPDNLQPLYYAIRDQLPAWHGLPGGVIGLGDSSYGDTFCGGGEQVRELFGELGVREVLPMLRLDASETVTPETDAEPWLAEFAAALKG</sequence>
<evidence type="ECO:0000250" key="1"/>
<evidence type="ECO:0000255" key="2">
    <source>
        <dbReference type="PROSITE-ProRule" id="PRU00088"/>
    </source>
</evidence>
<evidence type="ECO:0000305" key="3"/>
<evidence type="ECO:0007829" key="4">
    <source>
        <dbReference type="PDB" id="5B3K"/>
    </source>
</evidence>
<evidence type="ECO:0007829" key="5">
    <source>
        <dbReference type="PDB" id="5B3L"/>
    </source>
</evidence>
<keyword id="KW-0002">3D-structure</keyword>
<keyword id="KW-0249">Electron transport</keyword>
<keyword id="KW-0285">Flavoprotein</keyword>
<keyword id="KW-0288">FMN</keyword>
<keyword id="KW-1185">Reference proteome</keyword>
<keyword id="KW-0813">Transport</keyword>
<name>Y3435_PSEAE</name>
<proteinExistence type="evidence at protein level"/>
<accession>Q9HYH1</accession>
<comment type="function">
    <text>Probable electron transporter.</text>
</comment>
<comment type="cofactor">
    <cofactor evidence="1">
        <name>FMN</name>
        <dbReference type="ChEBI" id="CHEBI:58210"/>
    </cofactor>
</comment>
<comment type="similarity">
    <text evidence="3">Belongs to the flavodoxin family. MioC subfamily.</text>
</comment>